<gene>
    <name evidence="1" type="primary">tsaD</name>
    <name type="synonym">gcp</name>
    <name type="ordered locus">XOO3901</name>
</gene>
<feature type="chain" id="PRO_0000303620" description="tRNA N6-adenosine threonylcarbamoyltransferase">
    <location>
        <begin position="1"/>
        <end position="354"/>
    </location>
</feature>
<feature type="binding site" evidence="1">
    <location>
        <position position="115"/>
    </location>
    <ligand>
        <name>Fe cation</name>
        <dbReference type="ChEBI" id="CHEBI:24875"/>
    </ligand>
</feature>
<feature type="binding site" evidence="1">
    <location>
        <position position="119"/>
    </location>
    <ligand>
        <name>Fe cation</name>
        <dbReference type="ChEBI" id="CHEBI:24875"/>
    </ligand>
</feature>
<feature type="binding site" evidence="1">
    <location>
        <begin position="138"/>
        <end position="142"/>
    </location>
    <ligand>
        <name>substrate</name>
    </ligand>
</feature>
<feature type="binding site" evidence="1">
    <location>
        <position position="171"/>
    </location>
    <ligand>
        <name>substrate</name>
    </ligand>
</feature>
<feature type="binding site" evidence="1">
    <location>
        <position position="184"/>
    </location>
    <ligand>
        <name>substrate</name>
    </ligand>
</feature>
<feature type="binding site" evidence="1">
    <location>
        <position position="276"/>
    </location>
    <ligand>
        <name>substrate</name>
    </ligand>
</feature>
<feature type="binding site" evidence="1">
    <location>
        <position position="304"/>
    </location>
    <ligand>
        <name>Fe cation</name>
        <dbReference type="ChEBI" id="CHEBI:24875"/>
    </ligand>
</feature>
<evidence type="ECO:0000255" key="1">
    <source>
        <dbReference type="HAMAP-Rule" id="MF_01445"/>
    </source>
</evidence>
<comment type="function">
    <text evidence="1">Required for the formation of a threonylcarbamoyl group on adenosine at position 37 (t(6)A37) in tRNAs that read codons beginning with adenine. Is involved in the transfer of the threonylcarbamoyl moiety of threonylcarbamoyl-AMP (TC-AMP) to the N6 group of A37, together with TsaE and TsaB. TsaD likely plays a direct catalytic role in this reaction.</text>
</comment>
<comment type="catalytic activity">
    <reaction evidence="1">
        <text>L-threonylcarbamoyladenylate + adenosine(37) in tRNA = N(6)-L-threonylcarbamoyladenosine(37) in tRNA + AMP + H(+)</text>
        <dbReference type="Rhea" id="RHEA:37059"/>
        <dbReference type="Rhea" id="RHEA-COMP:10162"/>
        <dbReference type="Rhea" id="RHEA-COMP:10163"/>
        <dbReference type="ChEBI" id="CHEBI:15378"/>
        <dbReference type="ChEBI" id="CHEBI:73682"/>
        <dbReference type="ChEBI" id="CHEBI:74411"/>
        <dbReference type="ChEBI" id="CHEBI:74418"/>
        <dbReference type="ChEBI" id="CHEBI:456215"/>
        <dbReference type="EC" id="2.3.1.234"/>
    </reaction>
</comment>
<comment type="cofactor">
    <cofactor evidence="1">
        <name>Fe(2+)</name>
        <dbReference type="ChEBI" id="CHEBI:29033"/>
    </cofactor>
    <text evidence="1">Binds 1 Fe(2+) ion per subunit.</text>
</comment>
<comment type="subcellular location">
    <subcellularLocation>
        <location evidence="1">Cytoplasm</location>
    </subcellularLocation>
</comment>
<comment type="similarity">
    <text evidence="1">Belongs to the KAE1 / TsaD family.</text>
</comment>
<protein>
    <recommendedName>
        <fullName evidence="1">tRNA N6-adenosine threonylcarbamoyltransferase</fullName>
        <ecNumber evidence="1">2.3.1.234</ecNumber>
    </recommendedName>
    <alternativeName>
        <fullName evidence="1">N6-L-threonylcarbamoyladenine synthase</fullName>
        <shortName evidence="1">t(6)A synthase</shortName>
    </alternativeName>
    <alternativeName>
        <fullName evidence="1">t(6)A37 threonylcarbamoyladenosine biosynthesis protein TsaD</fullName>
    </alternativeName>
    <alternativeName>
        <fullName evidence="1">tRNA threonylcarbamoyladenosine biosynthesis protein TsaD</fullName>
    </alternativeName>
</protein>
<sequence>MKVLGIESSCDETGVAVYDTALSGVPALRAHAVYSQIALHAEYGGVVPELASRDHVRKLLPLIRQTLGEAGVGIDELDGVAYTAGPGLVGALLVGAGVARSLAWALDVPAIGVHHMEGHLLAPLMEDDPPEPPFVALLVSGGHTQLVSVKALGSYEVLGETLDDAAGEAFDKTAKMMGLPYPGGPQLAALAETGTPGRYRFARPMTDRPGLDFSFSGLKTQVLLAWRSSDQSDTTRADIARGFEDAVVDTLVIKCLRALDAAECNTLVVAGGVGVNKRLRARLQEAAQRRGGRVCFPRPALCTDNGAMIAFAGALRLQAGERADAAVHVTPRWDMAALPPLAAGRDSGVEIREW</sequence>
<organism>
    <name type="scientific">Xanthomonas oryzae pv. oryzae (strain MAFF 311018)</name>
    <dbReference type="NCBI Taxonomy" id="342109"/>
    <lineage>
        <taxon>Bacteria</taxon>
        <taxon>Pseudomonadati</taxon>
        <taxon>Pseudomonadota</taxon>
        <taxon>Gammaproteobacteria</taxon>
        <taxon>Lysobacterales</taxon>
        <taxon>Lysobacteraceae</taxon>
        <taxon>Xanthomonas</taxon>
    </lineage>
</organism>
<accession>Q2NYH1</accession>
<name>TSAD_XANOM</name>
<keyword id="KW-0012">Acyltransferase</keyword>
<keyword id="KW-0963">Cytoplasm</keyword>
<keyword id="KW-0408">Iron</keyword>
<keyword id="KW-0479">Metal-binding</keyword>
<keyword id="KW-0808">Transferase</keyword>
<keyword id="KW-0819">tRNA processing</keyword>
<reference key="1">
    <citation type="journal article" date="2005" name="Jpn. Agric. Res. Q.">
        <title>Genome sequence of Xanthomonas oryzae pv. oryzae suggests contribution of large numbers of effector genes and insertion sequences to its race diversity.</title>
        <authorList>
            <person name="Ochiai H."/>
            <person name="Inoue Y."/>
            <person name="Takeya M."/>
            <person name="Sasaki A."/>
            <person name="Kaku H."/>
        </authorList>
    </citation>
    <scope>NUCLEOTIDE SEQUENCE [LARGE SCALE GENOMIC DNA]</scope>
    <source>
        <strain>MAFF 311018</strain>
    </source>
</reference>
<dbReference type="EC" id="2.3.1.234" evidence="1"/>
<dbReference type="EMBL" id="AP008229">
    <property type="protein sequence ID" value="BAE70656.1"/>
    <property type="molecule type" value="Genomic_DNA"/>
</dbReference>
<dbReference type="RefSeq" id="WP_011260469.1">
    <property type="nucleotide sequence ID" value="NC_007705.1"/>
</dbReference>
<dbReference type="SMR" id="Q2NYH1"/>
<dbReference type="KEGG" id="xom:XOO3901"/>
<dbReference type="HOGENOM" id="CLU_023208_0_0_6"/>
<dbReference type="GO" id="GO:0005737">
    <property type="term" value="C:cytoplasm"/>
    <property type="evidence" value="ECO:0007669"/>
    <property type="project" value="UniProtKB-SubCell"/>
</dbReference>
<dbReference type="GO" id="GO:0005506">
    <property type="term" value="F:iron ion binding"/>
    <property type="evidence" value="ECO:0007669"/>
    <property type="project" value="UniProtKB-UniRule"/>
</dbReference>
<dbReference type="GO" id="GO:0061711">
    <property type="term" value="F:N(6)-L-threonylcarbamoyladenine synthase activity"/>
    <property type="evidence" value="ECO:0007669"/>
    <property type="project" value="UniProtKB-EC"/>
</dbReference>
<dbReference type="GO" id="GO:0002949">
    <property type="term" value="P:tRNA threonylcarbamoyladenosine modification"/>
    <property type="evidence" value="ECO:0007669"/>
    <property type="project" value="UniProtKB-UniRule"/>
</dbReference>
<dbReference type="CDD" id="cd24133">
    <property type="entry name" value="ASKHA_NBD_TsaD_bac"/>
    <property type="match status" value="1"/>
</dbReference>
<dbReference type="FunFam" id="3.30.420.40:FF:000012">
    <property type="entry name" value="tRNA N6-adenosine threonylcarbamoyltransferase"/>
    <property type="match status" value="1"/>
</dbReference>
<dbReference type="FunFam" id="3.30.420.40:FF:000031">
    <property type="entry name" value="tRNA N6-adenosine threonylcarbamoyltransferase"/>
    <property type="match status" value="1"/>
</dbReference>
<dbReference type="Gene3D" id="3.30.420.40">
    <property type="match status" value="2"/>
</dbReference>
<dbReference type="HAMAP" id="MF_01445">
    <property type="entry name" value="TsaD"/>
    <property type="match status" value="1"/>
</dbReference>
<dbReference type="InterPro" id="IPR043129">
    <property type="entry name" value="ATPase_NBD"/>
</dbReference>
<dbReference type="InterPro" id="IPR000905">
    <property type="entry name" value="Gcp-like_dom"/>
</dbReference>
<dbReference type="InterPro" id="IPR017861">
    <property type="entry name" value="KAE1/TsaD"/>
</dbReference>
<dbReference type="InterPro" id="IPR017860">
    <property type="entry name" value="Peptidase_M22_CS"/>
</dbReference>
<dbReference type="InterPro" id="IPR022450">
    <property type="entry name" value="TsaD"/>
</dbReference>
<dbReference type="NCBIfam" id="TIGR00329">
    <property type="entry name" value="gcp_kae1"/>
    <property type="match status" value="1"/>
</dbReference>
<dbReference type="NCBIfam" id="TIGR03723">
    <property type="entry name" value="T6A_TsaD_YgjD"/>
    <property type="match status" value="1"/>
</dbReference>
<dbReference type="PANTHER" id="PTHR11735">
    <property type="entry name" value="TRNA N6-ADENOSINE THREONYLCARBAMOYLTRANSFERASE"/>
    <property type="match status" value="1"/>
</dbReference>
<dbReference type="PANTHER" id="PTHR11735:SF6">
    <property type="entry name" value="TRNA N6-ADENOSINE THREONYLCARBAMOYLTRANSFERASE, MITOCHONDRIAL"/>
    <property type="match status" value="1"/>
</dbReference>
<dbReference type="Pfam" id="PF00814">
    <property type="entry name" value="TsaD"/>
    <property type="match status" value="1"/>
</dbReference>
<dbReference type="PRINTS" id="PR00789">
    <property type="entry name" value="OSIALOPTASE"/>
</dbReference>
<dbReference type="SUPFAM" id="SSF53067">
    <property type="entry name" value="Actin-like ATPase domain"/>
    <property type="match status" value="2"/>
</dbReference>
<dbReference type="PROSITE" id="PS01016">
    <property type="entry name" value="GLYCOPROTEASE"/>
    <property type="match status" value="1"/>
</dbReference>
<proteinExistence type="inferred from homology"/>